<evidence type="ECO:0000255" key="1">
    <source>
        <dbReference type="HAMAP-Rule" id="MF_00649"/>
    </source>
</evidence>
<comment type="function">
    <text evidence="1">Inhibits all the catalytic activities of DNA gyrase by preventing its interaction with DNA. Acts by binding directly to the C-terminal domain of GyrB, which probably disrupts DNA binding by the gyrase.</text>
</comment>
<comment type="cofactor">
    <cofactor evidence="1">
        <name>Zn(2+)</name>
        <dbReference type="ChEBI" id="CHEBI:29105"/>
    </cofactor>
    <text evidence="1">Binds 1 zinc ion.</text>
</comment>
<comment type="subunit">
    <text evidence="1">Interacts with GyrB.</text>
</comment>
<comment type="similarity">
    <text evidence="1">Belongs to the DNA gyrase inhibitor YacG family.</text>
</comment>
<name>YACG_PSET1</name>
<keyword id="KW-0479">Metal-binding</keyword>
<keyword id="KW-1185">Reference proteome</keyword>
<keyword id="KW-0862">Zinc</keyword>
<accession>Q3IID3</accession>
<reference key="1">
    <citation type="journal article" date="2005" name="Genome Res.">
        <title>Coping with cold: the genome of the versatile marine Antarctica bacterium Pseudoalteromonas haloplanktis TAC125.</title>
        <authorList>
            <person name="Medigue C."/>
            <person name="Krin E."/>
            <person name="Pascal G."/>
            <person name="Barbe V."/>
            <person name="Bernsel A."/>
            <person name="Bertin P.N."/>
            <person name="Cheung F."/>
            <person name="Cruveiller S."/>
            <person name="D'Amico S."/>
            <person name="Duilio A."/>
            <person name="Fang G."/>
            <person name="Feller G."/>
            <person name="Ho C."/>
            <person name="Mangenot S."/>
            <person name="Marino G."/>
            <person name="Nilsson J."/>
            <person name="Parrilli E."/>
            <person name="Rocha E.P.C."/>
            <person name="Rouy Z."/>
            <person name="Sekowska A."/>
            <person name="Tutino M.L."/>
            <person name="Vallenet D."/>
            <person name="von Heijne G."/>
            <person name="Danchin A."/>
        </authorList>
    </citation>
    <scope>NUCLEOTIDE SEQUENCE [LARGE SCALE GENOMIC DNA]</scope>
    <source>
        <strain>TAC 125</strain>
    </source>
</reference>
<protein>
    <recommendedName>
        <fullName evidence="1">DNA gyrase inhibitor YacG</fullName>
    </recommendedName>
</protein>
<gene>
    <name evidence="1" type="primary">yacG</name>
    <name type="ordered locus">PSHAa0377</name>
</gene>
<dbReference type="EMBL" id="CR954246">
    <property type="protein sequence ID" value="CAI85475.1"/>
    <property type="molecule type" value="Genomic_DNA"/>
</dbReference>
<dbReference type="SMR" id="Q3IID3"/>
<dbReference type="STRING" id="326442.PSHAa0377"/>
<dbReference type="KEGG" id="pha:PSHAa0377"/>
<dbReference type="eggNOG" id="COG3024">
    <property type="taxonomic scope" value="Bacteria"/>
</dbReference>
<dbReference type="HOGENOM" id="CLU_178280_1_2_6"/>
<dbReference type="BioCyc" id="PHAL326442:PSHA_RS01870-MONOMER"/>
<dbReference type="Proteomes" id="UP000006843">
    <property type="component" value="Chromosome I"/>
</dbReference>
<dbReference type="GO" id="GO:0008657">
    <property type="term" value="F:DNA topoisomerase type II (double strand cut, ATP-hydrolyzing) inhibitor activity"/>
    <property type="evidence" value="ECO:0007669"/>
    <property type="project" value="UniProtKB-UniRule"/>
</dbReference>
<dbReference type="GO" id="GO:0008270">
    <property type="term" value="F:zinc ion binding"/>
    <property type="evidence" value="ECO:0007669"/>
    <property type="project" value="UniProtKB-UniRule"/>
</dbReference>
<dbReference type="GO" id="GO:0006355">
    <property type="term" value="P:regulation of DNA-templated transcription"/>
    <property type="evidence" value="ECO:0007669"/>
    <property type="project" value="InterPro"/>
</dbReference>
<dbReference type="Gene3D" id="3.30.50.10">
    <property type="entry name" value="Erythroid Transcription Factor GATA-1, subunit A"/>
    <property type="match status" value="1"/>
</dbReference>
<dbReference type="HAMAP" id="MF_00649">
    <property type="entry name" value="DNA_gyrase_inhibitor_YacG"/>
    <property type="match status" value="1"/>
</dbReference>
<dbReference type="InterPro" id="IPR005584">
    <property type="entry name" value="DNA_gyrase_inhibitor_YacG"/>
</dbReference>
<dbReference type="InterPro" id="IPR013088">
    <property type="entry name" value="Znf_NHR/GATA"/>
</dbReference>
<dbReference type="NCBIfam" id="NF001638">
    <property type="entry name" value="PRK00418.1"/>
    <property type="match status" value="1"/>
</dbReference>
<dbReference type="PANTHER" id="PTHR36150">
    <property type="entry name" value="DNA GYRASE INHIBITOR YACG"/>
    <property type="match status" value="1"/>
</dbReference>
<dbReference type="PANTHER" id="PTHR36150:SF1">
    <property type="entry name" value="DNA GYRASE INHIBITOR YACG"/>
    <property type="match status" value="1"/>
</dbReference>
<dbReference type="Pfam" id="PF03884">
    <property type="entry name" value="YacG"/>
    <property type="match status" value="1"/>
</dbReference>
<dbReference type="SUPFAM" id="SSF57716">
    <property type="entry name" value="Glucocorticoid receptor-like (DNA-binding domain)"/>
    <property type="match status" value="1"/>
</dbReference>
<organism>
    <name type="scientific">Pseudoalteromonas translucida (strain TAC 125)</name>
    <dbReference type="NCBI Taxonomy" id="326442"/>
    <lineage>
        <taxon>Bacteria</taxon>
        <taxon>Pseudomonadati</taxon>
        <taxon>Pseudomonadota</taxon>
        <taxon>Gammaproteobacteria</taxon>
        <taxon>Alteromonadales</taxon>
        <taxon>Pseudoalteromonadaceae</taxon>
        <taxon>Pseudoalteromonas</taxon>
    </lineage>
</organism>
<proteinExistence type="inferred from homology"/>
<feature type="chain" id="PRO_1000056984" description="DNA gyrase inhibitor YacG">
    <location>
        <begin position="1"/>
        <end position="76"/>
    </location>
</feature>
<feature type="binding site" evidence="1">
    <location>
        <position position="7"/>
    </location>
    <ligand>
        <name>Zn(2+)</name>
        <dbReference type="ChEBI" id="CHEBI:29105"/>
    </ligand>
</feature>
<feature type="binding site" evidence="1">
    <location>
        <position position="10"/>
    </location>
    <ligand>
        <name>Zn(2+)</name>
        <dbReference type="ChEBI" id="CHEBI:29105"/>
    </ligand>
</feature>
<feature type="binding site" evidence="1">
    <location>
        <position position="26"/>
    </location>
    <ligand>
        <name>Zn(2+)</name>
        <dbReference type="ChEBI" id="CHEBI:29105"/>
    </ligand>
</feature>
<feature type="binding site" evidence="1">
    <location>
        <position position="30"/>
    </location>
    <ligand>
        <name>Zn(2+)</name>
        <dbReference type="ChEBI" id="CHEBI:29105"/>
    </ligand>
</feature>
<sequence length="76" mass="8805">MPTIVNCPTCKSKVEWSEQSPHRPFCSKRCQLIDLGEWSFENNRISAPITSAEDFSQDMIEDIEAMMAKNEDDFFK</sequence>